<reference key="1">
    <citation type="journal article" date="2003" name="Proc. Natl. Acad. Sci. U.S.A.">
        <title>Reductive genome evolution in Buchnera aphidicola.</title>
        <authorList>
            <person name="van Ham R.C.H.J."/>
            <person name="Kamerbeek J."/>
            <person name="Palacios C."/>
            <person name="Rausell C."/>
            <person name="Abascal F."/>
            <person name="Bastolla U."/>
            <person name="Fernandez J.M."/>
            <person name="Jimenez L."/>
            <person name="Postigo M."/>
            <person name="Silva F.J."/>
            <person name="Tamames J."/>
            <person name="Viguera E."/>
            <person name="Latorre A."/>
            <person name="Valencia A."/>
            <person name="Moran F."/>
            <person name="Moya A."/>
        </authorList>
    </citation>
    <scope>NUCLEOTIDE SEQUENCE [LARGE SCALE GENOMIC DNA]</scope>
    <source>
        <strain>Bp</strain>
    </source>
</reference>
<comment type="function">
    <text evidence="1">Could be a mediator in iron transactions between iron acquisition and iron-requiring processes, such as synthesis and/or repair of Fe-S clusters in biosynthetic enzymes.</text>
</comment>
<comment type="subunit">
    <text evidence="1">Monomer.</text>
</comment>
<comment type="similarity">
    <text evidence="1">Belongs to the Fe(2+)-trafficking protein family.</text>
</comment>
<name>FETP_BUCBP</name>
<organism>
    <name type="scientific">Buchnera aphidicola subsp. Baizongia pistaciae (strain Bp)</name>
    <dbReference type="NCBI Taxonomy" id="224915"/>
    <lineage>
        <taxon>Bacteria</taxon>
        <taxon>Pseudomonadati</taxon>
        <taxon>Pseudomonadota</taxon>
        <taxon>Gammaproteobacteria</taxon>
        <taxon>Enterobacterales</taxon>
        <taxon>Erwiniaceae</taxon>
        <taxon>Buchnera</taxon>
    </lineage>
</organism>
<gene>
    <name type="ordered locus">bbp_501</name>
</gene>
<dbReference type="EMBL" id="AE016826">
    <property type="protein sequence ID" value="AAO27206.1"/>
    <property type="molecule type" value="Genomic_DNA"/>
</dbReference>
<dbReference type="SMR" id="Q89A44"/>
<dbReference type="STRING" id="224915.bbp_501"/>
<dbReference type="KEGG" id="bab:bbp_501"/>
<dbReference type="eggNOG" id="COG2924">
    <property type="taxonomic scope" value="Bacteria"/>
</dbReference>
<dbReference type="HOGENOM" id="CLU_170994_0_0_6"/>
<dbReference type="OrthoDB" id="9804318at2"/>
<dbReference type="Proteomes" id="UP000000601">
    <property type="component" value="Chromosome"/>
</dbReference>
<dbReference type="GO" id="GO:0005829">
    <property type="term" value="C:cytosol"/>
    <property type="evidence" value="ECO:0007669"/>
    <property type="project" value="TreeGrafter"/>
</dbReference>
<dbReference type="GO" id="GO:0005506">
    <property type="term" value="F:iron ion binding"/>
    <property type="evidence" value="ECO:0007669"/>
    <property type="project" value="UniProtKB-UniRule"/>
</dbReference>
<dbReference type="GO" id="GO:0034599">
    <property type="term" value="P:cellular response to oxidative stress"/>
    <property type="evidence" value="ECO:0007669"/>
    <property type="project" value="TreeGrafter"/>
</dbReference>
<dbReference type="Gene3D" id="1.10.3880.10">
    <property type="entry name" value="Fe(II) trafficking protein YggX"/>
    <property type="match status" value="1"/>
</dbReference>
<dbReference type="HAMAP" id="MF_00686">
    <property type="entry name" value="Fe_traffic_YggX"/>
    <property type="match status" value="1"/>
</dbReference>
<dbReference type="InterPro" id="IPR007457">
    <property type="entry name" value="Fe_traffick_prot_YggX"/>
</dbReference>
<dbReference type="InterPro" id="IPR036766">
    <property type="entry name" value="Fe_traffick_prot_YggX_sf"/>
</dbReference>
<dbReference type="NCBIfam" id="NF003817">
    <property type="entry name" value="PRK05408.1"/>
    <property type="match status" value="1"/>
</dbReference>
<dbReference type="PANTHER" id="PTHR36965">
    <property type="entry name" value="FE(2+)-TRAFFICKING PROTEIN-RELATED"/>
    <property type="match status" value="1"/>
</dbReference>
<dbReference type="PANTHER" id="PTHR36965:SF1">
    <property type="entry name" value="FE(2+)-TRAFFICKING PROTEIN-RELATED"/>
    <property type="match status" value="1"/>
</dbReference>
<dbReference type="Pfam" id="PF04362">
    <property type="entry name" value="Iron_traffic"/>
    <property type="match status" value="1"/>
</dbReference>
<dbReference type="PIRSF" id="PIRSF029827">
    <property type="entry name" value="Fe_traffic_YggX"/>
    <property type="match status" value="1"/>
</dbReference>
<dbReference type="SUPFAM" id="SSF111148">
    <property type="entry name" value="YggX-like"/>
    <property type="match status" value="1"/>
</dbReference>
<feature type="chain" id="PRO_0000214472" description="Probable Fe(2+)-trafficking protein">
    <location>
        <begin position="1"/>
        <end position="87"/>
    </location>
</feature>
<accession>Q89A44</accession>
<sequence length="87" mass="10676">MNKKNDINRKIFCNFFKKYEEGLTYIPYPGLLGHKIYNEISKLAWNKWILQQTIIINEKKMNMLNKNDQKKIENYMIKFLFKNKQQL</sequence>
<keyword id="KW-0408">Iron</keyword>
<keyword id="KW-1185">Reference proteome</keyword>
<proteinExistence type="inferred from homology"/>
<evidence type="ECO:0000255" key="1">
    <source>
        <dbReference type="HAMAP-Rule" id="MF_00686"/>
    </source>
</evidence>
<protein>
    <recommendedName>
        <fullName evidence="1">Probable Fe(2+)-trafficking protein</fullName>
    </recommendedName>
</protein>